<dbReference type="EC" id="2.3.1.234" evidence="1"/>
<dbReference type="EMBL" id="AE017198">
    <property type="protein sequence ID" value="AAS08427.1"/>
    <property type="molecule type" value="Genomic_DNA"/>
</dbReference>
<dbReference type="RefSeq" id="WP_011161577.1">
    <property type="nucleotide sequence ID" value="NC_005362.1"/>
</dbReference>
<dbReference type="SMR" id="Q74KY8"/>
<dbReference type="KEGG" id="ljo:LJ_0436"/>
<dbReference type="PATRIC" id="fig|257314.6.peg.462"/>
<dbReference type="eggNOG" id="COG0533">
    <property type="taxonomic scope" value="Bacteria"/>
</dbReference>
<dbReference type="HOGENOM" id="CLU_023208_0_2_9"/>
<dbReference type="Proteomes" id="UP000000581">
    <property type="component" value="Chromosome"/>
</dbReference>
<dbReference type="GO" id="GO:0005737">
    <property type="term" value="C:cytoplasm"/>
    <property type="evidence" value="ECO:0007669"/>
    <property type="project" value="UniProtKB-SubCell"/>
</dbReference>
<dbReference type="GO" id="GO:0005506">
    <property type="term" value="F:iron ion binding"/>
    <property type="evidence" value="ECO:0007669"/>
    <property type="project" value="UniProtKB-UniRule"/>
</dbReference>
<dbReference type="GO" id="GO:0061711">
    <property type="term" value="F:N(6)-L-threonylcarbamoyladenine synthase activity"/>
    <property type="evidence" value="ECO:0007669"/>
    <property type="project" value="UniProtKB-EC"/>
</dbReference>
<dbReference type="GO" id="GO:0002949">
    <property type="term" value="P:tRNA threonylcarbamoyladenosine modification"/>
    <property type="evidence" value="ECO:0007669"/>
    <property type="project" value="UniProtKB-UniRule"/>
</dbReference>
<dbReference type="CDD" id="cd24133">
    <property type="entry name" value="ASKHA_NBD_TsaD_bac"/>
    <property type="match status" value="1"/>
</dbReference>
<dbReference type="FunFam" id="3.30.420.40:FF:000040">
    <property type="entry name" value="tRNA N6-adenosine threonylcarbamoyltransferase"/>
    <property type="match status" value="1"/>
</dbReference>
<dbReference type="Gene3D" id="3.30.420.40">
    <property type="match status" value="2"/>
</dbReference>
<dbReference type="HAMAP" id="MF_01445">
    <property type="entry name" value="TsaD"/>
    <property type="match status" value="1"/>
</dbReference>
<dbReference type="InterPro" id="IPR043129">
    <property type="entry name" value="ATPase_NBD"/>
</dbReference>
<dbReference type="InterPro" id="IPR000905">
    <property type="entry name" value="Gcp-like_dom"/>
</dbReference>
<dbReference type="InterPro" id="IPR017861">
    <property type="entry name" value="KAE1/TsaD"/>
</dbReference>
<dbReference type="InterPro" id="IPR022450">
    <property type="entry name" value="TsaD"/>
</dbReference>
<dbReference type="NCBIfam" id="TIGR00329">
    <property type="entry name" value="gcp_kae1"/>
    <property type="match status" value="1"/>
</dbReference>
<dbReference type="NCBIfam" id="TIGR03723">
    <property type="entry name" value="T6A_TsaD_YgjD"/>
    <property type="match status" value="1"/>
</dbReference>
<dbReference type="PANTHER" id="PTHR11735">
    <property type="entry name" value="TRNA N6-ADENOSINE THREONYLCARBAMOYLTRANSFERASE"/>
    <property type="match status" value="1"/>
</dbReference>
<dbReference type="PANTHER" id="PTHR11735:SF6">
    <property type="entry name" value="TRNA N6-ADENOSINE THREONYLCARBAMOYLTRANSFERASE, MITOCHONDRIAL"/>
    <property type="match status" value="1"/>
</dbReference>
<dbReference type="Pfam" id="PF00814">
    <property type="entry name" value="TsaD"/>
    <property type="match status" value="1"/>
</dbReference>
<dbReference type="PRINTS" id="PR00789">
    <property type="entry name" value="OSIALOPTASE"/>
</dbReference>
<dbReference type="SUPFAM" id="SSF53067">
    <property type="entry name" value="Actin-like ATPase domain"/>
    <property type="match status" value="2"/>
</dbReference>
<organism>
    <name type="scientific">Lactobacillus johnsonii (strain CNCM I-12250 / La1 / NCC 533)</name>
    <dbReference type="NCBI Taxonomy" id="257314"/>
    <lineage>
        <taxon>Bacteria</taxon>
        <taxon>Bacillati</taxon>
        <taxon>Bacillota</taxon>
        <taxon>Bacilli</taxon>
        <taxon>Lactobacillales</taxon>
        <taxon>Lactobacillaceae</taxon>
        <taxon>Lactobacillus</taxon>
    </lineage>
</organism>
<reference key="1">
    <citation type="journal article" date="2004" name="Proc. Natl. Acad. Sci. U.S.A.">
        <title>The genome sequence of the probiotic intestinal bacterium Lactobacillus johnsonii NCC 533.</title>
        <authorList>
            <person name="Pridmore R.D."/>
            <person name="Berger B."/>
            <person name="Desiere F."/>
            <person name="Vilanova D."/>
            <person name="Barretto C."/>
            <person name="Pittet A.-C."/>
            <person name="Zwahlen M.-C."/>
            <person name="Rouvet M."/>
            <person name="Altermann E."/>
            <person name="Barrangou R."/>
            <person name="Mollet B."/>
            <person name="Mercenier A."/>
            <person name="Klaenhammer T."/>
            <person name="Arigoni F."/>
            <person name="Schell M.A."/>
        </authorList>
    </citation>
    <scope>NUCLEOTIDE SEQUENCE [LARGE SCALE GENOMIC DNA]</scope>
    <source>
        <strain>CNCM I-1225 / La1 / NCC 533</strain>
    </source>
</reference>
<evidence type="ECO:0000255" key="1">
    <source>
        <dbReference type="HAMAP-Rule" id="MF_01445"/>
    </source>
</evidence>
<proteinExistence type="inferred from homology"/>
<comment type="function">
    <text evidence="1">Required for the formation of a threonylcarbamoyl group on adenosine at position 37 (t(6)A37) in tRNAs that read codons beginning with adenine. Is involved in the transfer of the threonylcarbamoyl moiety of threonylcarbamoyl-AMP (TC-AMP) to the N6 group of A37, together with TsaE and TsaB. TsaD likely plays a direct catalytic role in this reaction.</text>
</comment>
<comment type="catalytic activity">
    <reaction evidence="1">
        <text>L-threonylcarbamoyladenylate + adenosine(37) in tRNA = N(6)-L-threonylcarbamoyladenosine(37) in tRNA + AMP + H(+)</text>
        <dbReference type="Rhea" id="RHEA:37059"/>
        <dbReference type="Rhea" id="RHEA-COMP:10162"/>
        <dbReference type="Rhea" id="RHEA-COMP:10163"/>
        <dbReference type="ChEBI" id="CHEBI:15378"/>
        <dbReference type="ChEBI" id="CHEBI:73682"/>
        <dbReference type="ChEBI" id="CHEBI:74411"/>
        <dbReference type="ChEBI" id="CHEBI:74418"/>
        <dbReference type="ChEBI" id="CHEBI:456215"/>
        <dbReference type="EC" id="2.3.1.234"/>
    </reaction>
</comment>
<comment type="cofactor">
    <cofactor evidence="1">
        <name>Fe(2+)</name>
        <dbReference type="ChEBI" id="CHEBI:29033"/>
    </cofactor>
    <text evidence="1">Binds 1 Fe(2+) ion per subunit.</text>
</comment>
<comment type="subcellular location">
    <subcellularLocation>
        <location evidence="1">Cytoplasm</location>
    </subcellularLocation>
</comment>
<comment type="similarity">
    <text evidence="1">Belongs to the KAE1 / TsaD family.</text>
</comment>
<keyword id="KW-0012">Acyltransferase</keyword>
<keyword id="KW-0963">Cytoplasm</keyword>
<keyword id="KW-0408">Iron</keyword>
<keyword id="KW-0479">Metal-binding</keyword>
<keyword id="KW-0808">Transferase</keyword>
<keyword id="KW-0819">tRNA processing</keyword>
<sequence>MTKKDVRILAFESSCDETSTAVIKNGREIESLIVATQIKSHQRFGGVVPEVASRHHIEVITQITKEALDKANATWDDIDAIAVTYGPGLVGALLIGVSAAKAASMATGIPLIGVDHIMGHIMAAQLKDEIEYPALALQVSGGHTEIVLMKDPIHFEIVGDTRDDAAGEAYDKIGRVLGVNYPAGKTIDEWAHKGKDTFHFPRAMMEDDDYDFSFSGLKSAFINTCHHADQIHEELDKYDLAASFQASVVDVLSHKTIRAIKEYKPKTFILGGGVAANHGLRDRLAEEIEKLPADIKPKVILPDLKLCGDNAAMIGAAAYNLYQAGKFSDVNLNADPSLELPYADSMLK</sequence>
<accession>Q74KY8</accession>
<gene>
    <name evidence="1" type="primary">tsaD</name>
    <name type="synonym">gcp</name>
    <name type="ordered locus">LJ_0436</name>
</gene>
<feature type="chain" id="PRO_0000303395" description="tRNA N6-adenosine threonylcarbamoyltransferase">
    <location>
        <begin position="1"/>
        <end position="348"/>
    </location>
</feature>
<feature type="binding site" evidence="1">
    <location>
        <position position="116"/>
    </location>
    <ligand>
        <name>Fe cation</name>
        <dbReference type="ChEBI" id="CHEBI:24875"/>
    </ligand>
</feature>
<feature type="binding site" evidence="1">
    <location>
        <position position="120"/>
    </location>
    <ligand>
        <name>Fe cation</name>
        <dbReference type="ChEBI" id="CHEBI:24875"/>
    </ligand>
</feature>
<feature type="binding site" evidence="1">
    <location>
        <begin position="138"/>
        <end position="142"/>
    </location>
    <ligand>
        <name>substrate</name>
    </ligand>
</feature>
<feature type="binding site" evidence="1">
    <location>
        <position position="171"/>
    </location>
    <ligand>
        <name>substrate</name>
    </ligand>
</feature>
<feature type="binding site" evidence="1">
    <location>
        <position position="184"/>
    </location>
    <ligand>
        <name>substrate</name>
    </ligand>
</feature>
<feature type="binding site" evidence="1">
    <location>
        <position position="188"/>
    </location>
    <ligand>
        <name>substrate</name>
    </ligand>
</feature>
<feature type="binding site" evidence="1">
    <location>
        <position position="277"/>
    </location>
    <ligand>
        <name>substrate</name>
    </ligand>
</feature>
<feature type="binding site" evidence="1">
    <location>
        <position position="309"/>
    </location>
    <ligand>
        <name>Fe cation</name>
        <dbReference type="ChEBI" id="CHEBI:24875"/>
    </ligand>
</feature>
<protein>
    <recommendedName>
        <fullName evidence="1">tRNA N6-adenosine threonylcarbamoyltransferase</fullName>
        <ecNumber evidence="1">2.3.1.234</ecNumber>
    </recommendedName>
    <alternativeName>
        <fullName evidence="1">N6-L-threonylcarbamoyladenine synthase</fullName>
        <shortName evidence="1">t(6)A synthase</shortName>
    </alternativeName>
    <alternativeName>
        <fullName evidence="1">t(6)A37 threonylcarbamoyladenosine biosynthesis protein TsaD</fullName>
    </alternativeName>
    <alternativeName>
        <fullName evidence="1">tRNA threonylcarbamoyladenosine biosynthesis protein TsaD</fullName>
    </alternativeName>
</protein>
<name>TSAD_LACJO</name>